<dbReference type="EC" id="1.3.7.7" evidence="1"/>
<dbReference type="EMBL" id="AB001684">
    <property type="protein sequence ID" value="BAA57958.1"/>
    <property type="molecule type" value="Genomic_DNA"/>
</dbReference>
<dbReference type="PIR" id="T07310">
    <property type="entry name" value="T07310"/>
</dbReference>
<dbReference type="RefSeq" id="NP_045882.1">
    <property type="nucleotide sequence ID" value="NC_001865.1"/>
</dbReference>
<dbReference type="SMR" id="P56303"/>
<dbReference type="GeneID" id="809202"/>
<dbReference type="UniPathway" id="UPA00670"/>
<dbReference type="GO" id="GO:0009507">
    <property type="term" value="C:chloroplast"/>
    <property type="evidence" value="ECO:0007669"/>
    <property type="project" value="UniProtKB-SubCell"/>
</dbReference>
<dbReference type="GO" id="GO:0051539">
    <property type="term" value="F:4 iron, 4 sulfur cluster binding"/>
    <property type="evidence" value="ECO:0007669"/>
    <property type="project" value="UniProtKB-UniRule"/>
</dbReference>
<dbReference type="GO" id="GO:0005524">
    <property type="term" value="F:ATP binding"/>
    <property type="evidence" value="ECO:0007669"/>
    <property type="project" value="UniProtKB-UniRule"/>
</dbReference>
<dbReference type="GO" id="GO:0046872">
    <property type="term" value="F:metal ion binding"/>
    <property type="evidence" value="ECO:0007669"/>
    <property type="project" value="UniProtKB-KW"/>
</dbReference>
<dbReference type="GO" id="GO:0016730">
    <property type="term" value="F:oxidoreductase activity, acting on iron-sulfur proteins as donors"/>
    <property type="evidence" value="ECO:0007669"/>
    <property type="project" value="InterPro"/>
</dbReference>
<dbReference type="GO" id="GO:0016636">
    <property type="term" value="F:oxidoreductase activity, acting on the CH-CH group of donors, iron-sulfur protein as acceptor"/>
    <property type="evidence" value="ECO:0007669"/>
    <property type="project" value="UniProtKB-UniRule"/>
</dbReference>
<dbReference type="GO" id="GO:0036068">
    <property type="term" value="P:light-independent chlorophyll biosynthetic process"/>
    <property type="evidence" value="ECO:0007669"/>
    <property type="project" value="UniProtKB-UniRule"/>
</dbReference>
<dbReference type="GO" id="GO:0019685">
    <property type="term" value="P:photosynthesis, dark reaction"/>
    <property type="evidence" value="ECO:0007669"/>
    <property type="project" value="InterPro"/>
</dbReference>
<dbReference type="CDD" id="cd01979">
    <property type="entry name" value="Pchlide_reductase_N"/>
    <property type="match status" value="1"/>
</dbReference>
<dbReference type="Gene3D" id="3.40.50.1980">
    <property type="entry name" value="Nitrogenase molybdenum iron protein domain"/>
    <property type="match status" value="3"/>
</dbReference>
<dbReference type="HAMAP" id="MF_00352">
    <property type="entry name" value="ChlN_BchN"/>
    <property type="match status" value="1"/>
</dbReference>
<dbReference type="InterPro" id="IPR050293">
    <property type="entry name" value="LIPOR_BchN/ChlN"/>
</dbReference>
<dbReference type="InterPro" id="IPR000510">
    <property type="entry name" value="Nase/OxRdtase_comp1"/>
</dbReference>
<dbReference type="InterPro" id="IPR005970">
    <property type="entry name" value="Protochl_reductN"/>
</dbReference>
<dbReference type="NCBIfam" id="TIGR01279">
    <property type="entry name" value="DPOR_bchN"/>
    <property type="match status" value="1"/>
</dbReference>
<dbReference type="NCBIfam" id="NF002768">
    <property type="entry name" value="PRK02842.1"/>
    <property type="match status" value="1"/>
</dbReference>
<dbReference type="PANTHER" id="PTHR39429">
    <property type="entry name" value="LIGHT-INDEPENDENT PROTOCHLOROPHYLLIDE REDUCTASE SUBUNIT N"/>
    <property type="match status" value="1"/>
</dbReference>
<dbReference type="PANTHER" id="PTHR39429:SF3">
    <property type="entry name" value="LIGHT-INDEPENDENT PROTOCHLOROPHYLLIDE REDUCTASE SUBUNIT N"/>
    <property type="match status" value="1"/>
</dbReference>
<dbReference type="Pfam" id="PF00148">
    <property type="entry name" value="Oxidored_nitro"/>
    <property type="match status" value="1"/>
</dbReference>
<dbReference type="PIRSF" id="PIRSF000162">
    <property type="entry name" value="P_chlorophyll_rd"/>
    <property type="match status" value="1"/>
</dbReference>
<dbReference type="SUPFAM" id="SSF53807">
    <property type="entry name" value="Helical backbone' metal receptor"/>
    <property type="match status" value="1"/>
</dbReference>
<feature type="chain" id="PRO_0000208611" description="Light-independent protochlorophyllide reductase subunit N">
    <location>
        <begin position="1"/>
        <end position="435"/>
    </location>
</feature>
<feature type="binding site" evidence="1">
    <location>
        <position position="23"/>
    </location>
    <ligand>
        <name>[4Fe-4S] cluster</name>
        <dbReference type="ChEBI" id="CHEBI:49883"/>
        <note>ligand shared with heterodimeric partner</note>
    </ligand>
</feature>
<feature type="binding site" evidence="1">
    <location>
        <position position="48"/>
    </location>
    <ligand>
        <name>[4Fe-4S] cluster</name>
        <dbReference type="ChEBI" id="CHEBI:49883"/>
        <note>ligand shared with heterodimeric partner</note>
    </ligand>
</feature>
<feature type="binding site" evidence="1">
    <location>
        <position position="108"/>
    </location>
    <ligand>
        <name>[4Fe-4S] cluster</name>
        <dbReference type="ChEBI" id="CHEBI:49883"/>
        <note>ligand shared with heterodimeric partner</note>
    </ligand>
</feature>
<proteinExistence type="inferred from homology"/>
<protein>
    <recommendedName>
        <fullName evidence="1">Light-independent protochlorophyllide reductase subunit N</fullName>
        <shortName evidence="1">DPOR subunit N</shortName>
        <shortName evidence="1">LI-POR subunit N</shortName>
        <ecNumber evidence="1">1.3.7.7</ecNumber>
    </recommendedName>
</protein>
<organism>
    <name type="scientific">Chlorella vulgaris</name>
    <name type="common">Green alga</name>
    <dbReference type="NCBI Taxonomy" id="3077"/>
    <lineage>
        <taxon>Eukaryota</taxon>
        <taxon>Viridiplantae</taxon>
        <taxon>Chlorophyta</taxon>
        <taxon>core chlorophytes</taxon>
        <taxon>Trebouxiophyceae</taxon>
        <taxon>Chlorellales</taxon>
        <taxon>Chlorellaceae</taxon>
        <taxon>Chlorella clade</taxon>
        <taxon>Chlorella</taxon>
    </lineage>
</organism>
<reference key="1">
    <citation type="journal article" date="1997" name="Proc. Natl. Acad. Sci. U.S.A.">
        <title>Complete nucleotide sequence of the chloroplast genome from the green alga Chlorella vulgaris: the existence of genes possibly involved in chloroplast division.</title>
        <authorList>
            <person name="Wakasugi T."/>
            <person name="Nagai T."/>
            <person name="Kapoor M."/>
            <person name="Sugita M."/>
            <person name="Ito M."/>
            <person name="Ito S."/>
            <person name="Tsudzuki J."/>
            <person name="Nakashima K."/>
            <person name="Tsudzuki T."/>
            <person name="Suzuki Y."/>
            <person name="Hamada A."/>
            <person name="Ohta T."/>
            <person name="Inamura A."/>
            <person name="Yoshinaga K."/>
            <person name="Sugiura M."/>
        </authorList>
    </citation>
    <scope>NUCLEOTIDE SEQUENCE [LARGE SCALE GENOMIC DNA]</scope>
    <source>
        <strain>IAM C-27 / Tamiya</strain>
    </source>
</reference>
<accession>P56303</accession>
<name>CHLN_CHLVU</name>
<sequence>MTNSKLTETLTFECETGNYHTFCPISCVAWLYQKIEDSFFLVIGTKTCGYFLQNALGVMIFAEPRYAMAELEEADISAQLNDYKELKRLCLQIKQDRNPSVIVWIGTCTTEIIKMDLEGMAPRLEAEIQTPIVVARANGLDYAFTQGEDTVLAAMVQRCPSNAPEQNQIEKKSLVLFGSLPTNVATQLNLELERCGIQVAGWLPSQRYADLPVLNQNVYVCGINPFLSRTATTLMRRRKCKLISAPFPIGPDGTRAWLEKICSVFNVAPINLIERERLIWDSLEDYITLLRGKSVFFMGDNLLEISLARFLVRCGMIVYEIGIPYLDKRFQSAELQLLEKTCSEMNVAMPRIVEKPDNYNQIQRIRELQPDLAITGMAHANPLEARGINTKWSVEFTFAQIHGFTNARDILELVTRPLRRNKALENLGWNQLVKM</sequence>
<comment type="function">
    <text evidence="1">Component of the dark-operative protochlorophyllide reductase (DPOR) that uses Mg-ATP and reduced ferredoxin to reduce ring D of protochlorophyllide (Pchlide) to form chlorophyllide a (Chlide). This reaction is light-independent. The NB-protein (ChlN-ChlB) is the catalytic component of the complex.</text>
</comment>
<comment type="catalytic activity">
    <reaction evidence="1">
        <text>chlorophyllide a + oxidized 2[4Fe-4S]-[ferredoxin] + 2 ADP + 2 phosphate = protochlorophyllide a + reduced 2[4Fe-4S]-[ferredoxin] + 2 ATP + 2 H2O</text>
        <dbReference type="Rhea" id="RHEA:28202"/>
        <dbReference type="Rhea" id="RHEA-COMP:10002"/>
        <dbReference type="Rhea" id="RHEA-COMP:10004"/>
        <dbReference type="ChEBI" id="CHEBI:15377"/>
        <dbReference type="ChEBI" id="CHEBI:30616"/>
        <dbReference type="ChEBI" id="CHEBI:33722"/>
        <dbReference type="ChEBI" id="CHEBI:33723"/>
        <dbReference type="ChEBI" id="CHEBI:43474"/>
        <dbReference type="ChEBI" id="CHEBI:83348"/>
        <dbReference type="ChEBI" id="CHEBI:83350"/>
        <dbReference type="ChEBI" id="CHEBI:456216"/>
        <dbReference type="EC" id="1.3.7.7"/>
    </reaction>
</comment>
<comment type="cofactor">
    <cofactor evidence="1">
        <name>[4Fe-4S] cluster</name>
        <dbReference type="ChEBI" id="CHEBI:49883"/>
    </cofactor>
    <text evidence="1">Binds 1 [4Fe-4S] cluster per heterodimer. The cluster is bound at the heterodimer interface by residues from both subunits.</text>
</comment>
<comment type="pathway">
    <text evidence="1">Porphyrin-containing compound metabolism; chlorophyll biosynthesis (light-independent).</text>
</comment>
<comment type="subunit">
    <text evidence="1">Protochlorophyllide reductase is composed of three subunits; ChlL, ChlN and ChlB. Forms a heterotetramer of two ChlB and two ChlN subunits.</text>
</comment>
<comment type="subcellular location">
    <subcellularLocation>
        <location>Plastid</location>
        <location>Chloroplast</location>
    </subcellularLocation>
</comment>
<comment type="similarity">
    <text evidence="1">Belongs to the BchN/ChlN family.</text>
</comment>
<evidence type="ECO:0000255" key="1">
    <source>
        <dbReference type="HAMAP-Rule" id="MF_00352"/>
    </source>
</evidence>
<keyword id="KW-0004">4Fe-4S</keyword>
<keyword id="KW-0067">ATP-binding</keyword>
<keyword id="KW-0149">Chlorophyll biosynthesis</keyword>
<keyword id="KW-0150">Chloroplast</keyword>
<keyword id="KW-0408">Iron</keyword>
<keyword id="KW-0411">Iron-sulfur</keyword>
<keyword id="KW-0479">Metal-binding</keyword>
<keyword id="KW-0547">Nucleotide-binding</keyword>
<keyword id="KW-0560">Oxidoreductase</keyword>
<keyword id="KW-0602">Photosynthesis</keyword>
<keyword id="KW-0934">Plastid</keyword>
<geneLocation type="chloroplast"/>
<gene>
    <name evidence="1" type="primary">chlN</name>
</gene>